<keyword id="KW-0131">Cell cycle</keyword>
<keyword id="KW-0132">Cell division</keyword>
<keyword id="KW-0133">Cell shape</keyword>
<keyword id="KW-0961">Cell wall biogenesis/degradation</keyword>
<keyword id="KW-0963">Cytoplasm</keyword>
<keyword id="KW-0274">FAD</keyword>
<keyword id="KW-0285">Flavoprotein</keyword>
<keyword id="KW-0521">NADP</keyword>
<keyword id="KW-0560">Oxidoreductase</keyword>
<keyword id="KW-0573">Peptidoglycan synthesis</keyword>
<sequence>MTGAVSLLETLQQAVPLAGFTSFRVGGLAQFYDEPASVEAIATAWQWARLADFPVTFLGAGSNLLISDRGLPGLVLNLRRLQGATFDLATGCVEVAAGEPIPRLAWAAARQGWSGLEWAVGIPGTLGGAVVMNAGAQGGCMADILQSVQVITDQGLETWSREQLQYDYRHSVLQTGHACVVSAQLQLQPGFERSQVLTTTSTNFRQRKRTQPYHLPNCGSVFRNPEPQKAGQLIEACGLKGYQIGDAQVSELHANFILNCGAARAQDILSLIRHVQGTVGDHFGVNLHPEVKLLGEFQDVI</sequence>
<organism>
    <name type="scientific">Synechococcus sp. (strain ATCC 27144 / PCC 6301 / SAUG 1402/1)</name>
    <name type="common">Anacystis nidulans</name>
    <dbReference type="NCBI Taxonomy" id="269084"/>
    <lineage>
        <taxon>Bacteria</taxon>
        <taxon>Bacillati</taxon>
        <taxon>Cyanobacteriota</taxon>
        <taxon>Cyanophyceae</taxon>
        <taxon>Synechococcales</taxon>
        <taxon>Synechococcaceae</taxon>
        <taxon>Synechococcus</taxon>
    </lineage>
</organism>
<evidence type="ECO:0000255" key="1">
    <source>
        <dbReference type="HAMAP-Rule" id="MF_00037"/>
    </source>
</evidence>
<comment type="function">
    <text evidence="1">Cell wall formation.</text>
</comment>
<comment type="catalytic activity">
    <reaction evidence="1">
        <text>UDP-N-acetyl-alpha-D-muramate + NADP(+) = UDP-N-acetyl-3-O-(1-carboxyvinyl)-alpha-D-glucosamine + NADPH + H(+)</text>
        <dbReference type="Rhea" id="RHEA:12248"/>
        <dbReference type="ChEBI" id="CHEBI:15378"/>
        <dbReference type="ChEBI" id="CHEBI:57783"/>
        <dbReference type="ChEBI" id="CHEBI:58349"/>
        <dbReference type="ChEBI" id="CHEBI:68483"/>
        <dbReference type="ChEBI" id="CHEBI:70757"/>
        <dbReference type="EC" id="1.3.1.98"/>
    </reaction>
</comment>
<comment type="cofactor">
    <cofactor evidence="1">
        <name>FAD</name>
        <dbReference type="ChEBI" id="CHEBI:57692"/>
    </cofactor>
</comment>
<comment type="pathway">
    <text evidence="1">Cell wall biogenesis; peptidoglycan biosynthesis.</text>
</comment>
<comment type="subcellular location">
    <subcellularLocation>
        <location evidence="1">Cytoplasm</location>
    </subcellularLocation>
</comment>
<comment type="similarity">
    <text evidence="1">Belongs to the MurB family.</text>
</comment>
<name>MURB_SYNP6</name>
<feature type="chain" id="PRO_0000224730" description="UDP-N-acetylenolpyruvoylglucosamine reductase">
    <location>
        <begin position="1"/>
        <end position="301"/>
    </location>
</feature>
<feature type="domain" description="FAD-binding PCMH-type" evidence="1">
    <location>
        <begin position="24"/>
        <end position="190"/>
    </location>
</feature>
<feature type="active site" evidence="1">
    <location>
        <position position="169"/>
    </location>
</feature>
<feature type="active site" description="Proton donor" evidence="1">
    <location>
        <position position="220"/>
    </location>
</feature>
<feature type="active site" evidence="1">
    <location>
        <position position="290"/>
    </location>
</feature>
<dbReference type="EC" id="1.3.1.98" evidence="1"/>
<dbReference type="EMBL" id="AP008231">
    <property type="protein sequence ID" value="BAD80541.1"/>
    <property type="molecule type" value="Genomic_DNA"/>
</dbReference>
<dbReference type="RefSeq" id="WP_011244661.1">
    <property type="nucleotide sequence ID" value="NZ_CP085785.1"/>
</dbReference>
<dbReference type="SMR" id="Q5MZH9"/>
<dbReference type="GeneID" id="72430611"/>
<dbReference type="KEGG" id="syc:syc2351_d"/>
<dbReference type="eggNOG" id="COG0812">
    <property type="taxonomic scope" value="Bacteria"/>
</dbReference>
<dbReference type="UniPathway" id="UPA00219"/>
<dbReference type="Proteomes" id="UP000001175">
    <property type="component" value="Chromosome"/>
</dbReference>
<dbReference type="GO" id="GO:0005829">
    <property type="term" value="C:cytosol"/>
    <property type="evidence" value="ECO:0007669"/>
    <property type="project" value="TreeGrafter"/>
</dbReference>
<dbReference type="GO" id="GO:0071949">
    <property type="term" value="F:FAD binding"/>
    <property type="evidence" value="ECO:0007669"/>
    <property type="project" value="InterPro"/>
</dbReference>
<dbReference type="GO" id="GO:0008762">
    <property type="term" value="F:UDP-N-acetylmuramate dehydrogenase activity"/>
    <property type="evidence" value="ECO:0007669"/>
    <property type="project" value="UniProtKB-UniRule"/>
</dbReference>
<dbReference type="GO" id="GO:0051301">
    <property type="term" value="P:cell division"/>
    <property type="evidence" value="ECO:0007669"/>
    <property type="project" value="UniProtKB-KW"/>
</dbReference>
<dbReference type="GO" id="GO:0071555">
    <property type="term" value="P:cell wall organization"/>
    <property type="evidence" value="ECO:0007669"/>
    <property type="project" value="UniProtKB-KW"/>
</dbReference>
<dbReference type="GO" id="GO:0009252">
    <property type="term" value="P:peptidoglycan biosynthetic process"/>
    <property type="evidence" value="ECO:0007669"/>
    <property type="project" value="UniProtKB-UniRule"/>
</dbReference>
<dbReference type="GO" id="GO:0008360">
    <property type="term" value="P:regulation of cell shape"/>
    <property type="evidence" value="ECO:0007669"/>
    <property type="project" value="UniProtKB-KW"/>
</dbReference>
<dbReference type="Gene3D" id="3.30.465.10">
    <property type="match status" value="1"/>
</dbReference>
<dbReference type="Gene3D" id="3.90.78.10">
    <property type="entry name" value="UDP-N-acetylenolpyruvoylglucosamine reductase, C-terminal domain"/>
    <property type="match status" value="1"/>
</dbReference>
<dbReference type="Gene3D" id="3.30.43.10">
    <property type="entry name" value="Uridine Diphospho-n-acetylenolpyruvylglucosamine Reductase, domain 2"/>
    <property type="match status" value="1"/>
</dbReference>
<dbReference type="HAMAP" id="MF_00037">
    <property type="entry name" value="MurB"/>
    <property type="match status" value="1"/>
</dbReference>
<dbReference type="InterPro" id="IPR016166">
    <property type="entry name" value="FAD-bd_PCMH"/>
</dbReference>
<dbReference type="InterPro" id="IPR036318">
    <property type="entry name" value="FAD-bd_PCMH-like_sf"/>
</dbReference>
<dbReference type="InterPro" id="IPR016167">
    <property type="entry name" value="FAD-bd_PCMH_sub1"/>
</dbReference>
<dbReference type="InterPro" id="IPR016169">
    <property type="entry name" value="FAD-bd_PCMH_sub2"/>
</dbReference>
<dbReference type="InterPro" id="IPR003170">
    <property type="entry name" value="MurB"/>
</dbReference>
<dbReference type="InterPro" id="IPR011601">
    <property type="entry name" value="MurB_C"/>
</dbReference>
<dbReference type="InterPro" id="IPR036635">
    <property type="entry name" value="MurB_C_sf"/>
</dbReference>
<dbReference type="InterPro" id="IPR006094">
    <property type="entry name" value="Oxid_FAD_bind_N"/>
</dbReference>
<dbReference type="NCBIfam" id="TIGR00179">
    <property type="entry name" value="murB"/>
    <property type="match status" value="1"/>
</dbReference>
<dbReference type="NCBIfam" id="NF010480">
    <property type="entry name" value="PRK13905.1"/>
    <property type="match status" value="1"/>
</dbReference>
<dbReference type="PANTHER" id="PTHR21071">
    <property type="entry name" value="UDP-N-ACETYLENOLPYRUVOYLGLUCOSAMINE REDUCTASE"/>
    <property type="match status" value="1"/>
</dbReference>
<dbReference type="PANTHER" id="PTHR21071:SF4">
    <property type="entry name" value="UDP-N-ACETYLENOLPYRUVOYLGLUCOSAMINE REDUCTASE"/>
    <property type="match status" value="1"/>
</dbReference>
<dbReference type="Pfam" id="PF01565">
    <property type="entry name" value="FAD_binding_4"/>
    <property type="match status" value="1"/>
</dbReference>
<dbReference type="Pfam" id="PF02873">
    <property type="entry name" value="MurB_C"/>
    <property type="match status" value="1"/>
</dbReference>
<dbReference type="SUPFAM" id="SSF56176">
    <property type="entry name" value="FAD-binding/transporter-associated domain-like"/>
    <property type="match status" value="1"/>
</dbReference>
<dbReference type="SUPFAM" id="SSF56194">
    <property type="entry name" value="Uridine diphospho-N-Acetylenolpyruvylglucosamine reductase, MurB, C-terminal domain"/>
    <property type="match status" value="1"/>
</dbReference>
<dbReference type="PROSITE" id="PS51387">
    <property type="entry name" value="FAD_PCMH"/>
    <property type="match status" value="1"/>
</dbReference>
<protein>
    <recommendedName>
        <fullName evidence="1">UDP-N-acetylenolpyruvoylglucosamine reductase</fullName>
        <ecNumber evidence="1">1.3.1.98</ecNumber>
    </recommendedName>
    <alternativeName>
        <fullName evidence="1">UDP-N-acetylmuramate dehydrogenase</fullName>
    </alternativeName>
</protein>
<gene>
    <name evidence="1" type="primary">murB</name>
    <name type="ordered locus">syc2351_d</name>
</gene>
<proteinExistence type="inferred from homology"/>
<accession>Q5MZH9</accession>
<reference key="1">
    <citation type="journal article" date="2007" name="Photosyn. Res.">
        <title>Complete nucleotide sequence of the freshwater unicellular cyanobacterium Synechococcus elongatus PCC 6301 chromosome: gene content and organization.</title>
        <authorList>
            <person name="Sugita C."/>
            <person name="Ogata K."/>
            <person name="Shikata M."/>
            <person name="Jikuya H."/>
            <person name="Takano J."/>
            <person name="Furumichi M."/>
            <person name="Kanehisa M."/>
            <person name="Omata T."/>
            <person name="Sugiura M."/>
            <person name="Sugita M."/>
        </authorList>
    </citation>
    <scope>NUCLEOTIDE SEQUENCE [LARGE SCALE GENOMIC DNA]</scope>
    <source>
        <strain>ATCC 27144 / PCC 6301 / SAUG 1402/1</strain>
    </source>
</reference>